<proteinExistence type="inferred from homology"/>
<protein>
    <recommendedName>
        <fullName evidence="1">Phosphoribosylaminoimidazole-succinocarboxamide synthase</fullName>
        <ecNumber evidence="1">6.3.2.6</ecNumber>
    </recommendedName>
    <alternativeName>
        <fullName evidence="1">SAICAR synthetase</fullName>
    </alternativeName>
</protein>
<accession>Q49WJ0</accession>
<sequence length="233" mass="26559">MSLLYEGKAKRIFSTGTSDVLRVEYKDEVTAGNGAKKDFIEGKGRLNNQITSRIFNYLKAKGLNSHFIEQISETEQLVNSVEIIPLEVVVRNIAAGSITKRLGFEKGHTFETPLVEFFYKNDDLNDPLITEDHIKLLQIANDGEIEKLKEAATEINEVLVNLMDKMNLRLVDFKIEFGRTNEGEILLADEISPDTCRIWDKQSDTNFDKDVYREDTGSIIETYQTFLNKLEAL</sequence>
<feature type="chain" id="PRO_1000018791" description="Phosphoribosylaminoimidazole-succinocarboxamide synthase">
    <location>
        <begin position="1"/>
        <end position="233"/>
    </location>
</feature>
<organism>
    <name type="scientific">Staphylococcus saprophyticus subsp. saprophyticus (strain ATCC 15305 / DSM 20229 / NCIMB 8711 / NCTC 7292 / S-41)</name>
    <dbReference type="NCBI Taxonomy" id="342451"/>
    <lineage>
        <taxon>Bacteria</taxon>
        <taxon>Bacillati</taxon>
        <taxon>Bacillota</taxon>
        <taxon>Bacilli</taxon>
        <taxon>Bacillales</taxon>
        <taxon>Staphylococcaceae</taxon>
        <taxon>Staphylococcus</taxon>
    </lineage>
</organism>
<reference key="1">
    <citation type="journal article" date="2005" name="Proc. Natl. Acad. Sci. U.S.A.">
        <title>Whole genome sequence of Staphylococcus saprophyticus reveals the pathogenesis of uncomplicated urinary tract infection.</title>
        <authorList>
            <person name="Kuroda M."/>
            <person name="Yamashita A."/>
            <person name="Hirakawa H."/>
            <person name="Kumano M."/>
            <person name="Morikawa K."/>
            <person name="Higashide M."/>
            <person name="Maruyama A."/>
            <person name="Inose Y."/>
            <person name="Matoba K."/>
            <person name="Toh H."/>
            <person name="Kuhara S."/>
            <person name="Hattori M."/>
            <person name="Ohta T."/>
        </authorList>
    </citation>
    <scope>NUCLEOTIDE SEQUENCE [LARGE SCALE GENOMIC DNA]</scope>
    <source>
        <strain>ATCC 15305 / DSM 20229 / NCIMB 8711 / NCTC 7292 / S-41</strain>
    </source>
</reference>
<dbReference type="EC" id="6.3.2.6" evidence="1"/>
<dbReference type="EMBL" id="AP008934">
    <property type="protein sequence ID" value="BAE18869.1"/>
    <property type="molecule type" value="Genomic_DNA"/>
</dbReference>
<dbReference type="RefSeq" id="WP_011303439.1">
    <property type="nucleotide sequence ID" value="NZ_MTGA01000039.1"/>
</dbReference>
<dbReference type="SMR" id="Q49WJ0"/>
<dbReference type="GeneID" id="3616633"/>
<dbReference type="KEGG" id="ssp:SSP1724"/>
<dbReference type="PATRIC" id="fig|342451.11.peg.1723"/>
<dbReference type="eggNOG" id="COG0152">
    <property type="taxonomic scope" value="Bacteria"/>
</dbReference>
<dbReference type="HOGENOM" id="CLU_061495_2_0_9"/>
<dbReference type="OrthoDB" id="9801549at2"/>
<dbReference type="UniPathway" id="UPA00074">
    <property type="reaction ID" value="UER00131"/>
</dbReference>
<dbReference type="Proteomes" id="UP000006371">
    <property type="component" value="Chromosome"/>
</dbReference>
<dbReference type="GO" id="GO:0005524">
    <property type="term" value="F:ATP binding"/>
    <property type="evidence" value="ECO:0007669"/>
    <property type="project" value="UniProtKB-KW"/>
</dbReference>
<dbReference type="GO" id="GO:0004639">
    <property type="term" value="F:phosphoribosylaminoimidazolesuccinocarboxamide synthase activity"/>
    <property type="evidence" value="ECO:0007669"/>
    <property type="project" value="UniProtKB-UniRule"/>
</dbReference>
<dbReference type="GO" id="GO:0006189">
    <property type="term" value="P:'de novo' IMP biosynthetic process"/>
    <property type="evidence" value="ECO:0007669"/>
    <property type="project" value="UniProtKB-UniRule"/>
</dbReference>
<dbReference type="GO" id="GO:0009236">
    <property type="term" value="P:cobalamin biosynthetic process"/>
    <property type="evidence" value="ECO:0007669"/>
    <property type="project" value="InterPro"/>
</dbReference>
<dbReference type="CDD" id="cd01415">
    <property type="entry name" value="SAICAR_synt_PurC"/>
    <property type="match status" value="1"/>
</dbReference>
<dbReference type="FunFam" id="3.30.470.20:FF:000006">
    <property type="entry name" value="Phosphoribosylaminoimidazole-succinocarboxamide synthase"/>
    <property type="match status" value="1"/>
</dbReference>
<dbReference type="Gene3D" id="3.30.470.20">
    <property type="entry name" value="ATP-grasp fold, B domain"/>
    <property type="match status" value="1"/>
</dbReference>
<dbReference type="Gene3D" id="3.30.200.20">
    <property type="entry name" value="Phosphorylase Kinase, domain 1"/>
    <property type="match status" value="1"/>
</dbReference>
<dbReference type="HAMAP" id="MF_00137">
    <property type="entry name" value="SAICAR_synth"/>
    <property type="match status" value="1"/>
</dbReference>
<dbReference type="InterPro" id="IPR028923">
    <property type="entry name" value="SAICAR_synt/ADE2_N"/>
</dbReference>
<dbReference type="InterPro" id="IPR033934">
    <property type="entry name" value="SAICAR_synt_PurC"/>
</dbReference>
<dbReference type="InterPro" id="IPR001636">
    <property type="entry name" value="SAICAR_synth"/>
</dbReference>
<dbReference type="InterPro" id="IPR050089">
    <property type="entry name" value="SAICAR_synthetase"/>
</dbReference>
<dbReference type="InterPro" id="IPR018236">
    <property type="entry name" value="SAICAR_synthetase_CS"/>
</dbReference>
<dbReference type="NCBIfam" id="TIGR00081">
    <property type="entry name" value="purC"/>
    <property type="match status" value="1"/>
</dbReference>
<dbReference type="PANTHER" id="PTHR43599">
    <property type="entry name" value="MULTIFUNCTIONAL PROTEIN ADE2"/>
    <property type="match status" value="1"/>
</dbReference>
<dbReference type="PANTHER" id="PTHR43599:SF3">
    <property type="entry name" value="SI:DKEY-6E2.2"/>
    <property type="match status" value="1"/>
</dbReference>
<dbReference type="Pfam" id="PF01259">
    <property type="entry name" value="SAICAR_synt"/>
    <property type="match status" value="1"/>
</dbReference>
<dbReference type="SUPFAM" id="SSF56104">
    <property type="entry name" value="SAICAR synthase-like"/>
    <property type="match status" value="1"/>
</dbReference>
<dbReference type="PROSITE" id="PS01057">
    <property type="entry name" value="SAICAR_SYNTHETASE_1"/>
    <property type="match status" value="1"/>
</dbReference>
<dbReference type="PROSITE" id="PS01058">
    <property type="entry name" value="SAICAR_SYNTHETASE_2"/>
    <property type="match status" value="1"/>
</dbReference>
<evidence type="ECO:0000255" key="1">
    <source>
        <dbReference type="HAMAP-Rule" id="MF_00137"/>
    </source>
</evidence>
<name>PUR7_STAS1</name>
<comment type="catalytic activity">
    <reaction evidence="1">
        <text>5-amino-1-(5-phospho-D-ribosyl)imidazole-4-carboxylate + L-aspartate + ATP = (2S)-2-[5-amino-1-(5-phospho-beta-D-ribosyl)imidazole-4-carboxamido]succinate + ADP + phosphate + 2 H(+)</text>
        <dbReference type="Rhea" id="RHEA:22628"/>
        <dbReference type="ChEBI" id="CHEBI:15378"/>
        <dbReference type="ChEBI" id="CHEBI:29991"/>
        <dbReference type="ChEBI" id="CHEBI:30616"/>
        <dbReference type="ChEBI" id="CHEBI:43474"/>
        <dbReference type="ChEBI" id="CHEBI:58443"/>
        <dbReference type="ChEBI" id="CHEBI:77657"/>
        <dbReference type="ChEBI" id="CHEBI:456216"/>
        <dbReference type="EC" id="6.3.2.6"/>
    </reaction>
</comment>
<comment type="pathway">
    <text evidence="1">Purine metabolism; IMP biosynthesis via de novo pathway; 5-amino-1-(5-phospho-D-ribosyl)imidazole-4-carboxamide from 5-amino-1-(5-phospho-D-ribosyl)imidazole-4-carboxylate: step 1/2.</text>
</comment>
<comment type="similarity">
    <text evidence="1">Belongs to the SAICAR synthetase family.</text>
</comment>
<gene>
    <name evidence="1" type="primary">purC</name>
    <name type="ordered locus">SSP1724</name>
</gene>
<keyword id="KW-0067">ATP-binding</keyword>
<keyword id="KW-0436">Ligase</keyword>
<keyword id="KW-0547">Nucleotide-binding</keyword>
<keyword id="KW-0658">Purine biosynthesis</keyword>
<keyword id="KW-1185">Reference proteome</keyword>